<name>RS12_MYCBO</name>
<proteinExistence type="evidence at protein level"/>
<gene>
    <name type="primary">rpsL</name>
    <name type="ordered locus">BQ2027_MB0701</name>
</gene>
<protein>
    <recommendedName>
        <fullName evidence="4">Small ribosomal subunit protein uS12</fullName>
    </recommendedName>
    <alternativeName>
        <fullName>30S ribosomal protein S12</fullName>
    </alternativeName>
</protein>
<dbReference type="EMBL" id="S79283">
    <property type="protein sequence ID" value="AAB35201.2"/>
    <property type="molecule type" value="Genomic_DNA"/>
</dbReference>
<dbReference type="EMBL" id="LT708304">
    <property type="protein sequence ID" value="SIT99299.1"/>
    <property type="molecule type" value="Genomic_DNA"/>
</dbReference>
<dbReference type="PIR" id="S36888">
    <property type="entry name" value="S36888"/>
</dbReference>
<dbReference type="RefSeq" id="NP_854359.1">
    <property type="nucleotide sequence ID" value="NC_002945.3"/>
</dbReference>
<dbReference type="RefSeq" id="WP_003403453.1">
    <property type="nucleotide sequence ID" value="NC_002945.4"/>
</dbReference>
<dbReference type="SMR" id="Q53538"/>
<dbReference type="GeneID" id="45424644"/>
<dbReference type="KEGG" id="mbo:BQ2027_MB0701"/>
<dbReference type="PATRIC" id="fig|233413.5.peg.764"/>
<dbReference type="Proteomes" id="UP000001419">
    <property type="component" value="Chromosome"/>
</dbReference>
<dbReference type="GO" id="GO:0015935">
    <property type="term" value="C:small ribosomal subunit"/>
    <property type="evidence" value="ECO:0007669"/>
    <property type="project" value="InterPro"/>
</dbReference>
<dbReference type="GO" id="GO:0019843">
    <property type="term" value="F:rRNA binding"/>
    <property type="evidence" value="ECO:0007669"/>
    <property type="project" value="UniProtKB-UniRule"/>
</dbReference>
<dbReference type="GO" id="GO:0003735">
    <property type="term" value="F:structural constituent of ribosome"/>
    <property type="evidence" value="ECO:0007669"/>
    <property type="project" value="InterPro"/>
</dbReference>
<dbReference type="GO" id="GO:0000049">
    <property type="term" value="F:tRNA binding"/>
    <property type="evidence" value="ECO:0007669"/>
    <property type="project" value="UniProtKB-UniRule"/>
</dbReference>
<dbReference type="GO" id="GO:0006412">
    <property type="term" value="P:translation"/>
    <property type="evidence" value="ECO:0007669"/>
    <property type="project" value="UniProtKB-UniRule"/>
</dbReference>
<dbReference type="CDD" id="cd03368">
    <property type="entry name" value="Ribosomal_S12"/>
    <property type="match status" value="1"/>
</dbReference>
<dbReference type="FunFam" id="2.40.50.140:FF:000001">
    <property type="entry name" value="30S ribosomal protein S12"/>
    <property type="match status" value="1"/>
</dbReference>
<dbReference type="Gene3D" id="2.40.50.140">
    <property type="entry name" value="Nucleic acid-binding proteins"/>
    <property type="match status" value="1"/>
</dbReference>
<dbReference type="HAMAP" id="MF_00403_B">
    <property type="entry name" value="Ribosomal_uS12_B"/>
    <property type="match status" value="1"/>
</dbReference>
<dbReference type="InterPro" id="IPR012340">
    <property type="entry name" value="NA-bd_OB-fold"/>
</dbReference>
<dbReference type="InterPro" id="IPR006032">
    <property type="entry name" value="Ribosomal_uS12"/>
</dbReference>
<dbReference type="InterPro" id="IPR005679">
    <property type="entry name" value="Ribosomal_uS12_bac"/>
</dbReference>
<dbReference type="NCBIfam" id="TIGR00981">
    <property type="entry name" value="rpsL_bact"/>
    <property type="match status" value="1"/>
</dbReference>
<dbReference type="PANTHER" id="PTHR11652">
    <property type="entry name" value="30S RIBOSOMAL PROTEIN S12 FAMILY MEMBER"/>
    <property type="match status" value="1"/>
</dbReference>
<dbReference type="Pfam" id="PF00164">
    <property type="entry name" value="Ribosom_S12_S23"/>
    <property type="match status" value="1"/>
</dbReference>
<dbReference type="PIRSF" id="PIRSF002133">
    <property type="entry name" value="Ribosomal_S12/S23"/>
    <property type="match status" value="1"/>
</dbReference>
<dbReference type="PRINTS" id="PR01034">
    <property type="entry name" value="RIBOSOMALS12"/>
</dbReference>
<dbReference type="SUPFAM" id="SSF50249">
    <property type="entry name" value="Nucleic acid-binding proteins"/>
    <property type="match status" value="1"/>
</dbReference>
<dbReference type="PROSITE" id="PS00055">
    <property type="entry name" value="RIBOSOMAL_S12"/>
    <property type="match status" value="1"/>
</dbReference>
<accession>Q53538</accession>
<accession>A0A1R3XW32</accession>
<accession>Q9R547</accession>
<accession>X2BFV8</accession>
<organism>
    <name type="scientific">Mycobacterium bovis (strain ATCC BAA-935 / AF2122/97)</name>
    <dbReference type="NCBI Taxonomy" id="233413"/>
    <lineage>
        <taxon>Bacteria</taxon>
        <taxon>Bacillati</taxon>
        <taxon>Actinomycetota</taxon>
        <taxon>Actinomycetes</taxon>
        <taxon>Mycobacteriales</taxon>
        <taxon>Mycobacteriaceae</taxon>
        <taxon>Mycobacterium</taxon>
        <taxon>Mycobacterium tuberculosis complex</taxon>
    </lineage>
</organism>
<evidence type="ECO:0000250" key="1"/>
<evidence type="ECO:0000256" key="2">
    <source>
        <dbReference type="SAM" id="MobiDB-lite"/>
    </source>
</evidence>
<evidence type="ECO:0000269" key="3">
    <source>
    </source>
</evidence>
<evidence type="ECO:0000305" key="4"/>
<reference key="1">
    <citation type="journal article" date="1995" name="Biochem. Mol. Biol. Int.">
        <title>Cloning and nucleotide sequence of the gene cluster encoding ribosomal proteins S12 and S7 from Mycobacterium bovis BCG.</title>
        <authorList>
            <person name="Iwanaga S."/>
            <person name="Ohara N."/>
            <person name="Kariu T."/>
            <person name="Kimura M."/>
            <person name="Yamasaki N."/>
            <person name="Yamada T."/>
        </authorList>
    </citation>
    <scope>NUCLEOTIDE SEQUENCE [GENOMIC DNA]</scope>
    <source>
        <strain>BCG</strain>
    </source>
</reference>
<reference key="2">
    <citation type="journal article" date="2003" name="Proc. Natl. Acad. Sci. U.S.A.">
        <title>The complete genome sequence of Mycobacterium bovis.</title>
        <authorList>
            <person name="Garnier T."/>
            <person name="Eiglmeier K."/>
            <person name="Camus J.-C."/>
            <person name="Medina N."/>
            <person name="Mansoor H."/>
            <person name="Pryor M."/>
            <person name="Duthoy S."/>
            <person name="Grondin S."/>
            <person name="Lacroix C."/>
            <person name="Monsempe C."/>
            <person name="Simon S."/>
            <person name="Harris B."/>
            <person name="Atkin R."/>
            <person name="Doggett J."/>
            <person name="Mayes R."/>
            <person name="Keating L."/>
            <person name="Wheeler P.R."/>
            <person name="Parkhill J."/>
            <person name="Barrell B.G."/>
            <person name="Cole S.T."/>
            <person name="Gordon S.V."/>
            <person name="Hewinson R.G."/>
        </authorList>
    </citation>
    <scope>NUCLEOTIDE SEQUENCE [LARGE SCALE GENOMIC DNA]</scope>
    <source>
        <strain>ATCC BAA-935 / AF2122/97</strain>
    </source>
</reference>
<reference key="3">
    <citation type="journal article" date="2017" name="Genome Announc.">
        <title>Updated reference genome sequence and annotation of Mycobacterium bovis AF2122/97.</title>
        <authorList>
            <person name="Malone K.M."/>
            <person name="Farrell D."/>
            <person name="Stuber T.P."/>
            <person name="Schubert O.T."/>
            <person name="Aebersold R."/>
            <person name="Robbe-Austerman S."/>
            <person name="Gordon S.V."/>
        </authorList>
    </citation>
    <scope>NUCLEOTIDE SEQUENCE [LARGE SCALE GENOMIC DNA]</scope>
    <scope>GENOME REANNOTATION</scope>
    <source>
        <strain>ATCC BAA-935 / AF2122/97</strain>
    </source>
</reference>
<reference key="4">
    <citation type="journal article" date="1993" name="FEBS Lett.">
        <title>Isolation and amino acid sequence of the 30S ribosomal protein S19 from Mycobacterium bovis BCG.</title>
        <authorList>
            <person name="Ohara N."/>
            <person name="Kimura M."/>
            <person name="Higashi Y."/>
            <person name="Yamada T."/>
        </authorList>
    </citation>
    <scope>PROTEIN SEQUENCE OF 2-16</scope>
    <source>
        <strain>BCG</strain>
    </source>
</reference>
<sequence>MPTIQQLVRKGRRDKISKVKTAALKGSPQRRGVCTRVYTTTPKKPNSALRKVARVKLTSQVEVTAYIPGEGHNLQEHSMVLVRGGRVKDLPGVRYKIIRGSLDTQGVKNRKQARSRYGAKKEKG</sequence>
<feature type="initiator methionine" description="Removed" evidence="3">
    <location>
        <position position="1"/>
    </location>
</feature>
<feature type="chain" id="PRO_0000146257" description="Small ribosomal subunit protein uS12">
    <location>
        <begin position="2"/>
        <end position="124"/>
    </location>
</feature>
<feature type="region of interest" description="Disordered" evidence="2">
    <location>
        <begin position="105"/>
        <end position="124"/>
    </location>
</feature>
<feature type="compositionally biased region" description="Basic residues" evidence="2">
    <location>
        <begin position="108"/>
        <end position="118"/>
    </location>
</feature>
<feature type="sequence conflict" description="In Ref. 1; AAB35201." evidence="4" ref="1">
    <original>L</original>
    <variation>P</variation>
    <location>
        <position position="24"/>
    </location>
</feature>
<feature type="sequence conflict" description="In Ref. 1; AAB35201." evidence="4" ref="1">
    <original>G</original>
    <variation>R</variation>
    <location>
        <position position="32"/>
    </location>
</feature>
<feature type="sequence conflict" description="In Ref. 1; AAB35201." evidence="4" ref="1">
    <original>T</original>
    <variation>N</variation>
    <location>
        <position position="35"/>
    </location>
</feature>
<feature type="sequence conflict" description="In Ref. 1; AAB35201." evidence="4" ref="1">
    <original>R</original>
    <variation>Q</variation>
    <location>
        <position position="94"/>
    </location>
</feature>
<comment type="function">
    <text evidence="1">With S4 and S5 plays an important role in translational accuracy.</text>
</comment>
<comment type="function">
    <text evidence="1">Interacts with and stabilizes bases of the 16S rRNA that are involved in tRNA selection in the A site and with the mRNA backbone. Located at the interface of the 30S and 50S subunits, it traverses the body of the 30S subunit contacting proteins on the other side and probably holding the rRNA structure together. The combined cluster of proteins S8, S12 and S17 appears to hold together the shoulder and platform of the 30S subunit (By similarity).</text>
</comment>
<comment type="subunit">
    <text evidence="1">Part of the 30S ribosomal subunit. Contacts proteins S8 and S17. May interact with IF1 in the 30S initiation complex (By similarity).</text>
</comment>
<comment type="similarity">
    <text evidence="4">Belongs to the universal ribosomal protein uS12 family.</text>
</comment>
<comment type="caution">
    <text evidence="4">Because the enzyme that would modify Asp-89 to 3-methylthioaspartic acid has not been found in the proteome of this organism, that modification is not predicted.</text>
</comment>
<keyword id="KW-0903">Direct protein sequencing</keyword>
<keyword id="KW-1185">Reference proteome</keyword>
<keyword id="KW-0687">Ribonucleoprotein</keyword>
<keyword id="KW-0689">Ribosomal protein</keyword>
<keyword id="KW-0694">RNA-binding</keyword>
<keyword id="KW-0699">rRNA-binding</keyword>
<keyword id="KW-0820">tRNA-binding</keyword>